<sequence length="268" mass="30232">MTNSSSSKKQAQDQPETSEPTLKSLKTKMTKSDEKQKKLKDIEISVPIVYGNVAFWLGKKASEYQSHKWAVYVRGATNEDISVVVKKVVFQLHSSFNSPTRVIEEPPFEVSESGWGEFEIAMTLHFHSDVCDKPLSLYHHLKLYPEDESGPLTMKKPVVVESYDEIVFPDPSESFLARVQNHPALTFPRLPSGYNLPAPMQVEDTGKKKRGDTKDHSLGQWFMSFSEADELLQLAAARQQVQAHIAKLRRQISLLEGQNQTVKTGSDL</sequence>
<reference key="1">
    <citation type="journal article" date="2004" name="Gene">
        <title>TBP-associated factors in Arabidopsis.</title>
        <authorList>
            <person name="Lago C."/>
            <person name="Clerici E."/>
            <person name="Mizzi L."/>
            <person name="Colombo L."/>
            <person name="Kater M.M."/>
        </authorList>
    </citation>
    <scope>NUCLEOTIDE SEQUENCE [MRNA]</scope>
    <scope>IDENTIFICATION</scope>
    <scope>NOMENCLATURE</scope>
    <scope>TISSUE SPECIFICITY</scope>
</reference>
<reference key="2">
    <citation type="journal article" date="2007" name="Plant Mol. Biol.">
        <title>Yeast two-hybrid map of Arabidopsis TFIID.</title>
        <authorList>
            <person name="Lawit S.J."/>
            <person name="O'Grady K."/>
            <person name="Gurley W.B."/>
            <person name="Czarnecka-Verner E."/>
        </authorList>
    </citation>
    <scope>NUCLEOTIDE SEQUENCE [MRNA] (ISOFORM 1)</scope>
    <scope>INTERACTION WITH TAF1; TAF4B AND TAF12B</scope>
    <source>
        <strain>cv. Columbia</strain>
    </source>
</reference>
<reference key="3">
    <citation type="journal article" date="2000" name="DNA Res.">
        <title>Structural analysis of Arabidopsis thaliana chromosome 5. X. Sequence features of the regions of 3,076,755 bp covered by sixty P1 and TAC clones.</title>
        <authorList>
            <person name="Sato S."/>
            <person name="Nakamura Y."/>
            <person name="Kaneko T."/>
            <person name="Katoh T."/>
            <person name="Asamizu E."/>
            <person name="Kotani H."/>
            <person name="Tabata S."/>
        </authorList>
    </citation>
    <scope>NUCLEOTIDE SEQUENCE [LARGE SCALE GENOMIC DNA]</scope>
    <source>
        <strain>cv. Columbia</strain>
    </source>
</reference>
<reference key="4">
    <citation type="journal article" date="2017" name="Plant J.">
        <title>Araport11: a complete reannotation of the Arabidopsis thaliana reference genome.</title>
        <authorList>
            <person name="Cheng C.Y."/>
            <person name="Krishnakumar V."/>
            <person name="Chan A.P."/>
            <person name="Thibaud-Nissen F."/>
            <person name="Schobel S."/>
            <person name="Town C.D."/>
        </authorList>
    </citation>
    <scope>GENOME REANNOTATION</scope>
    <source>
        <strain>cv. Columbia</strain>
    </source>
</reference>
<reference key="5">
    <citation type="journal article" date="2003" name="Science">
        <title>Empirical analysis of transcriptional activity in the Arabidopsis genome.</title>
        <authorList>
            <person name="Yamada K."/>
            <person name="Lim J."/>
            <person name="Dale J.M."/>
            <person name="Chen H."/>
            <person name="Shinn P."/>
            <person name="Palm C.J."/>
            <person name="Southwick A.M."/>
            <person name="Wu H.C."/>
            <person name="Kim C.J."/>
            <person name="Nguyen M."/>
            <person name="Pham P.K."/>
            <person name="Cheuk R.F."/>
            <person name="Karlin-Newmann G."/>
            <person name="Liu S.X."/>
            <person name="Lam B."/>
            <person name="Sakano H."/>
            <person name="Wu T."/>
            <person name="Yu G."/>
            <person name="Miranda M."/>
            <person name="Quach H.L."/>
            <person name="Tripp M."/>
            <person name="Chang C.H."/>
            <person name="Lee J.M."/>
            <person name="Toriumi M.J."/>
            <person name="Chan M.M."/>
            <person name="Tang C.C."/>
            <person name="Onodera C.S."/>
            <person name="Deng J.M."/>
            <person name="Akiyama K."/>
            <person name="Ansari Y."/>
            <person name="Arakawa T."/>
            <person name="Banh J."/>
            <person name="Banno F."/>
            <person name="Bowser L."/>
            <person name="Brooks S.Y."/>
            <person name="Carninci P."/>
            <person name="Chao Q."/>
            <person name="Choy N."/>
            <person name="Enju A."/>
            <person name="Goldsmith A.D."/>
            <person name="Gurjal M."/>
            <person name="Hansen N.F."/>
            <person name="Hayashizaki Y."/>
            <person name="Johnson-Hopson C."/>
            <person name="Hsuan V.W."/>
            <person name="Iida K."/>
            <person name="Karnes M."/>
            <person name="Khan S."/>
            <person name="Koesema E."/>
            <person name="Ishida J."/>
            <person name="Jiang P.X."/>
            <person name="Jones T."/>
            <person name="Kawai J."/>
            <person name="Kamiya A."/>
            <person name="Meyers C."/>
            <person name="Nakajima M."/>
            <person name="Narusaka M."/>
            <person name="Seki M."/>
            <person name="Sakurai T."/>
            <person name="Satou M."/>
            <person name="Tamse R."/>
            <person name="Vaysberg M."/>
            <person name="Wallender E.K."/>
            <person name="Wong C."/>
            <person name="Yamamura Y."/>
            <person name="Yuan S."/>
            <person name="Shinozaki K."/>
            <person name="Davis R.W."/>
            <person name="Theologis A."/>
            <person name="Ecker J.R."/>
        </authorList>
    </citation>
    <scope>NUCLEOTIDE SEQUENCE [LARGE SCALE MRNA] (ISOFORM 1)</scope>
    <source>
        <strain>cv. Columbia</strain>
    </source>
</reference>
<reference key="6">
    <citation type="journal article" date="2000" name="J. Biol. Chem.">
        <title>GAS41, a highly conserved protein in eukaryotic nuclei, binds to NuMA.</title>
        <authorList>
            <person name="Harborth J."/>
            <person name="Weber K."/>
            <person name="Osborn M."/>
        </authorList>
    </citation>
    <scope>IDENTIFICATION</scope>
</reference>
<reference key="7">
    <citation type="journal article" date="2011" name="Plant Cell">
        <title>The FRIGIDA complex activates transcription of FLC, a strong flowering repressor in Arabidopsis, by recruiting chromatin modification factors.</title>
        <authorList>
            <person name="Choi K."/>
            <person name="Kim J."/>
            <person name="Hwang H.J."/>
            <person name="Kim S."/>
            <person name="Park C."/>
            <person name="Kim S.Y."/>
            <person name="Lee I."/>
        </authorList>
    </citation>
    <scope>IDENTIFICATION BY MASS SPECTROMETRY</scope>
    <scope>INTERACTION WITH FLX</scope>
    <scope>DISRUPTION PHENOTYPE</scope>
</reference>
<reference key="8">
    <citation type="journal article" date="2012" name="Plant Sci.">
        <title>The Arabidopsis ortholog of the YEATS domain containing protein YAF9a regulates flowering by controlling H4 acetylation levels at the FLC locus.</title>
        <authorList>
            <person name="Zacharaki V."/>
            <person name="Benhamed M."/>
            <person name="Poulios S."/>
            <person name="Latrasse D."/>
            <person name="Papoutsoglou P."/>
            <person name="Delarue M."/>
            <person name="Vlachonasios K.E."/>
        </authorList>
    </citation>
    <scope>FUNCTION</scope>
    <scope>DISRUPTION PHENOTYPE</scope>
    <scope>TISSUE SPECIFICITY</scope>
</reference>
<reference key="9">
    <citation type="journal article" date="2015" name="BMC Plant Biol.">
        <title>AtEAF1 is a potential platform protein for Arabidopsis NuA4 acetyltransferase complex.</title>
        <authorList>
            <person name="Bieluszewski T."/>
            <person name="Galganski L."/>
            <person name="Sura W."/>
            <person name="Bieluszewska A."/>
            <person name="Abram M."/>
            <person name="Ludwikow A."/>
            <person name="Ziolkowski P."/>
            <person name="Sadowski J."/>
        </authorList>
    </citation>
    <scope>FUNCTION</scope>
    <scope>IDENTIFICATION IN THE NUA4/SWR1 COMPLEX</scope>
    <scope>INTERACTION WITH SWC4; EAF1A AND EAF1B</scope>
    <scope>DISRUPTION PHENOTYPE</scope>
</reference>
<keyword id="KW-0002">3D-structure</keyword>
<keyword id="KW-0010">Activator</keyword>
<keyword id="KW-0025">Alternative splicing</keyword>
<keyword id="KW-0156">Chromatin regulator</keyword>
<keyword id="KW-0175">Coiled coil</keyword>
<keyword id="KW-0963">Cytoplasm</keyword>
<keyword id="KW-0217">Developmental protein</keyword>
<keyword id="KW-0221">Differentiation</keyword>
<keyword id="KW-0227">DNA damage</keyword>
<keyword id="KW-0234">DNA repair</keyword>
<keyword id="KW-0287">Flowering</keyword>
<keyword id="KW-0539">Nucleus</keyword>
<keyword id="KW-1185">Reference proteome</keyword>
<keyword id="KW-0804">Transcription</keyword>
<keyword id="KW-0805">Transcription regulation</keyword>
<feature type="chain" id="PRO_0000423726" description="Transcription initiation factor TFIID subunit 14b">
    <location>
        <begin position="1"/>
        <end position="268"/>
    </location>
</feature>
<feature type="domain" description="YEATS" evidence="3">
    <location>
        <begin position="38"/>
        <end position="182"/>
    </location>
</feature>
<feature type="region of interest" description="Disordered" evidence="4">
    <location>
        <begin position="1"/>
        <end position="36"/>
    </location>
</feature>
<feature type="coiled-coil region" evidence="2">
    <location>
        <begin position="229"/>
        <end position="263"/>
    </location>
</feature>
<feature type="compositionally biased region" description="Polar residues" evidence="4">
    <location>
        <begin position="1"/>
        <end position="20"/>
    </location>
</feature>
<feature type="splice variant" id="VSP_053264" description="In isoform 2." evidence="13">
    <location>
        <position position="36"/>
    </location>
</feature>
<comment type="function">
    <text evidence="8 9">Negative regulator of flowering controlling the H4K5 acetylation levels in the FLC and FT chromatin. Positively regulates FLC expression. Component of the transcription factor IID (TFIID) complex that is essential for mediating regulation of RNA polymerase transcription. Component of the SWR1 complex which mediates the ATP-dependent exchange of histone H2A for the H2A variant HZT1 leading to transcriptional regulation of selected genes by chromatin remodeling. Component of a NuA4 histone acetyltransferase complex which is involved in transcriptional activation of selected genes principally by acetylation of nucleosomal histones H4 and H2A.</text>
</comment>
<comment type="subunit">
    <text evidence="6 7 9">Component of the TFIID complex. TFIID is composed of TATA binding protein (TBP) and a number of TBP-associated factors (TAFs) whose MWs range from 14-217 kDa. Interacts with TAF1, TAF4B and TAF12B. Component of the SWR1 chromatin-remodeling complex. Interacts with FLX, a component of the transcription activator complex FRI-C (PubMed:17340043, PubMed:21282526). Interacts with SWC4, and with EAF1A and EAF1B (via HSA domain) (Ref.9).</text>
</comment>
<comment type="subcellular location">
    <subcellularLocation>
        <location evidence="1">Cytoplasm</location>
    </subcellularLocation>
    <subcellularLocation>
        <location evidence="13">Nucleus</location>
    </subcellularLocation>
</comment>
<comment type="alternative products">
    <event type="alternative splicing"/>
    <isoform>
        <id>Q9FH40-1</id>
        <name>1</name>
        <sequence type="displayed"/>
    </isoform>
    <isoform>
        <id>Q9FH40-2</id>
        <name>2</name>
        <sequence type="described" ref="VSP_053264"/>
    </isoform>
</comment>
<comment type="tissue specificity">
    <text evidence="5 8">Expressed in roots, leaves, inflorescence and flowering tissues.</text>
</comment>
<comment type="disruption phenotype">
    <text evidence="7 8 9">No visible phenotype, due to the redundancy with TAF14. Modest early flowering. Taf14 and taf14b double mutants show a pleiotropic phenotype that includes small size and abnormal leaf morphology (PubMed:21282526, PubMed:23017898). Taf14 and taf14b double mutants show a reduced H4K5 acetylation in the promoter region of major flowering regulator genes including FLC, CO and SOC1, and a more pronounced early flowering (Ref.9).</text>
</comment>
<comment type="similarity">
    <text evidence="13">Belongs to the YAF9 family.</text>
</comment>
<protein>
    <recommendedName>
        <fullName evidence="11">Transcription initiation factor TFIID subunit 14b</fullName>
    </recommendedName>
    <alternativeName>
        <fullName evidence="10">GAS 41-like protein</fullName>
    </alternativeName>
    <alternativeName>
        <fullName evidence="12">Protein AF-9 homolog a</fullName>
    </alternativeName>
    <alternativeName>
        <fullName evidence="11">TBP-associated factor 14b</fullName>
        <shortName evidence="11">AtTAF14b</shortName>
    </alternativeName>
</protein>
<accession>Q9FH40</accession>
<accession>F4KEK5</accession>
<organism>
    <name type="scientific">Arabidopsis thaliana</name>
    <name type="common">Mouse-ear cress</name>
    <dbReference type="NCBI Taxonomy" id="3702"/>
    <lineage>
        <taxon>Eukaryota</taxon>
        <taxon>Viridiplantae</taxon>
        <taxon>Streptophyta</taxon>
        <taxon>Embryophyta</taxon>
        <taxon>Tracheophyta</taxon>
        <taxon>Spermatophyta</taxon>
        <taxon>Magnoliopsida</taxon>
        <taxon>eudicotyledons</taxon>
        <taxon>Gunneridae</taxon>
        <taxon>Pentapetalae</taxon>
        <taxon>rosids</taxon>
        <taxon>malvids</taxon>
        <taxon>Brassicales</taxon>
        <taxon>Brassicaceae</taxon>
        <taxon>Camelineae</taxon>
        <taxon>Arabidopsis</taxon>
    </lineage>
</organism>
<gene>
    <name evidence="11" type="primary">TAF14B</name>
    <name evidence="10" type="synonym">GAS41</name>
    <name evidence="12" type="synonym">YAF9A</name>
    <name evidence="14" type="ordered locus">At5g45600</name>
    <name evidence="15" type="ORF">K2N11.8</name>
</gene>
<evidence type="ECO:0000250" key="1"/>
<evidence type="ECO:0000255" key="2"/>
<evidence type="ECO:0000255" key="3">
    <source>
        <dbReference type="PROSITE-ProRule" id="PRU00376"/>
    </source>
</evidence>
<evidence type="ECO:0000256" key="4">
    <source>
        <dbReference type="SAM" id="MobiDB-lite"/>
    </source>
</evidence>
<evidence type="ECO:0000269" key="5">
    <source>
    </source>
</evidence>
<evidence type="ECO:0000269" key="6">
    <source>
    </source>
</evidence>
<evidence type="ECO:0000269" key="7">
    <source>
    </source>
</evidence>
<evidence type="ECO:0000269" key="8">
    <source>
    </source>
</evidence>
<evidence type="ECO:0000269" key="9">
    <source ref="9"/>
</evidence>
<evidence type="ECO:0000303" key="10">
    <source>
    </source>
</evidence>
<evidence type="ECO:0000303" key="11">
    <source>
    </source>
</evidence>
<evidence type="ECO:0000303" key="12">
    <source>
    </source>
</evidence>
<evidence type="ECO:0000305" key="13"/>
<evidence type="ECO:0000312" key="14">
    <source>
        <dbReference type="Araport" id="AT5G45600"/>
    </source>
</evidence>
<evidence type="ECO:0000312" key="15">
    <source>
        <dbReference type="EMBL" id="BAB11199.1"/>
    </source>
</evidence>
<proteinExistence type="evidence at protein level"/>
<name>TA14B_ARATH</name>
<dbReference type="EMBL" id="AY463617">
    <property type="protein sequence ID" value="AAR28019.1"/>
    <property type="molecule type" value="mRNA"/>
</dbReference>
<dbReference type="EMBL" id="AB022213">
    <property type="protein sequence ID" value="BAB11199.1"/>
    <property type="molecule type" value="Genomic_DNA"/>
</dbReference>
<dbReference type="EMBL" id="CP002688">
    <property type="protein sequence ID" value="AED95273.1"/>
    <property type="molecule type" value="Genomic_DNA"/>
</dbReference>
<dbReference type="EMBL" id="CP002688">
    <property type="protein sequence ID" value="AED95274.1"/>
    <property type="molecule type" value="Genomic_DNA"/>
</dbReference>
<dbReference type="EMBL" id="AY072123">
    <property type="protein sequence ID" value="AAL59945.1"/>
    <property type="molecule type" value="mRNA"/>
</dbReference>
<dbReference type="EMBL" id="AY096486">
    <property type="protein sequence ID" value="AAM20126.1"/>
    <property type="molecule type" value="mRNA"/>
</dbReference>
<dbReference type="RefSeq" id="NP_001190475.1">
    <molecule id="Q9FH40-2"/>
    <property type="nucleotide sequence ID" value="NM_001203546.1"/>
</dbReference>
<dbReference type="RefSeq" id="NP_199373.1">
    <molecule id="Q9FH40-1"/>
    <property type="nucleotide sequence ID" value="NM_123928.4"/>
</dbReference>
<dbReference type="PDB" id="8JG4">
    <property type="method" value="X-ray"/>
    <property type="resolution" value="2.30 A"/>
    <property type="chains" value="A/B=38-210"/>
</dbReference>
<dbReference type="PDBsum" id="8JG4"/>
<dbReference type="SMR" id="Q9FH40"/>
<dbReference type="BioGRID" id="19848">
    <property type="interactions" value="19"/>
</dbReference>
<dbReference type="FunCoup" id="Q9FH40">
    <property type="interactions" value="3932"/>
</dbReference>
<dbReference type="IntAct" id="Q9FH40">
    <property type="interactions" value="11"/>
</dbReference>
<dbReference type="STRING" id="3702.Q9FH40"/>
<dbReference type="iPTMnet" id="Q9FH40"/>
<dbReference type="PaxDb" id="3702-AT5G45600.1"/>
<dbReference type="ProteomicsDB" id="232998">
    <molecule id="Q9FH40-1"/>
</dbReference>
<dbReference type="EnsemblPlants" id="AT5G45600.1">
    <molecule id="Q9FH40-1"/>
    <property type="protein sequence ID" value="AT5G45600.1"/>
    <property type="gene ID" value="AT5G45600"/>
</dbReference>
<dbReference type="EnsemblPlants" id="AT5G45600.2">
    <molecule id="Q9FH40-2"/>
    <property type="protein sequence ID" value="AT5G45600.2"/>
    <property type="gene ID" value="AT5G45600"/>
</dbReference>
<dbReference type="GeneID" id="834599"/>
<dbReference type="Gramene" id="AT5G45600.1">
    <molecule id="Q9FH40-1"/>
    <property type="protein sequence ID" value="AT5G45600.1"/>
    <property type="gene ID" value="AT5G45600"/>
</dbReference>
<dbReference type="Gramene" id="AT5G45600.2">
    <molecule id="Q9FH40-2"/>
    <property type="protein sequence ID" value="AT5G45600.2"/>
    <property type="gene ID" value="AT5G45600"/>
</dbReference>
<dbReference type="KEGG" id="ath:AT5G45600"/>
<dbReference type="Araport" id="AT5G45600"/>
<dbReference type="TAIR" id="AT5G45600">
    <property type="gene designation" value="GAS41"/>
</dbReference>
<dbReference type="eggNOG" id="KOG3149">
    <property type="taxonomic scope" value="Eukaryota"/>
</dbReference>
<dbReference type="HOGENOM" id="CLU_051385_1_1_1"/>
<dbReference type="InParanoid" id="Q9FH40"/>
<dbReference type="OMA" id="AHIAKFR"/>
<dbReference type="OrthoDB" id="16041at2759"/>
<dbReference type="PhylomeDB" id="Q9FH40"/>
<dbReference type="PRO" id="PR:Q9FH40"/>
<dbReference type="Proteomes" id="UP000006548">
    <property type="component" value="Chromosome 5"/>
</dbReference>
<dbReference type="ExpressionAtlas" id="Q9FH40">
    <property type="expression patterns" value="baseline and differential"/>
</dbReference>
<dbReference type="GO" id="GO:0005737">
    <property type="term" value="C:cytoplasm"/>
    <property type="evidence" value="ECO:0007669"/>
    <property type="project" value="UniProtKB-SubCell"/>
</dbReference>
<dbReference type="GO" id="GO:0035267">
    <property type="term" value="C:NuA4 histone acetyltransferase complex"/>
    <property type="evidence" value="ECO:0000314"/>
    <property type="project" value="UniProtKB"/>
</dbReference>
<dbReference type="GO" id="GO:0005634">
    <property type="term" value="C:nucleus"/>
    <property type="evidence" value="ECO:0000314"/>
    <property type="project" value="UniProtKB"/>
</dbReference>
<dbReference type="GO" id="GO:0000812">
    <property type="term" value="C:Swr1 complex"/>
    <property type="evidence" value="ECO:0000314"/>
    <property type="project" value="TAIR"/>
</dbReference>
<dbReference type="GO" id="GO:0030154">
    <property type="term" value="P:cell differentiation"/>
    <property type="evidence" value="ECO:0007669"/>
    <property type="project" value="UniProtKB-KW"/>
</dbReference>
<dbReference type="GO" id="GO:0006325">
    <property type="term" value="P:chromatin organization"/>
    <property type="evidence" value="ECO:0007669"/>
    <property type="project" value="UniProtKB-KW"/>
</dbReference>
<dbReference type="GO" id="GO:0006281">
    <property type="term" value="P:DNA repair"/>
    <property type="evidence" value="ECO:0007669"/>
    <property type="project" value="UniProtKB-KW"/>
</dbReference>
<dbReference type="GO" id="GO:0009908">
    <property type="term" value="P:flower development"/>
    <property type="evidence" value="ECO:0007669"/>
    <property type="project" value="UniProtKB-KW"/>
</dbReference>
<dbReference type="GO" id="GO:0006355">
    <property type="term" value="P:regulation of DNA-templated transcription"/>
    <property type="evidence" value="ECO:0007669"/>
    <property type="project" value="InterPro"/>
</dbReference>
<dbReference type="GO" id="GO:0009909">
    <property type="term" value="P:regulation of flower development"/>
    <property type="evidence" value="ECO:0000315"/>
    <property type="project" value="UniProtKB"/>
</dbReference>
<dbReference type="GO" id="GO:2000028">
    <property type="term" value="P:regulation of photoperiodism, flowering"/>
    <property type="evidence" value="ECO:0000316"/>
    <property type="project" value="TAIR"/>
</dbReference>
<dbReference type="GO" id="GO:0048510">
    <property type="term" value="P:regulation of timing of transition from vegetative to reproductive phase"/>
    <property type="evidence" value="ECO:0000315"/>
    <property type="project" value="UniProtKB"/>
</dbReference>
<dbReference type="CDD" id="cd16910">
    <property type="entry name" value="YEATS_TFIID14_like"/>
    <property type="match status" value="1"/>
</dbReference>
<dbReference type="FunFam" id="2.60.40.1970:FF:000008">
    <property type="entry name" value="Transcription initiation factor TFIID subunit 14"/>
    <property type="match status" value="1"/>
</dbReference>
<dbReference type="Gene3D" id="2.60.40.1970">
    <property type="entry name" value="YEATS domain"/>
    <property type="match status" value="1"/>
</dbReference>
<dbReference type="InterPro" id="IPR038704">
    <property type="entry name" value="YEAST_sf"/>
</dbReference>
<dbReference type="InterPro" id="IPR005033">
    <property type="entry name" value="YEATS"/>
</dbReference>
<dbReference type="InterPro" id="IPR055129">
    <property type="entry name" value="YEATS_dom"/>
</dbReference>
<dbReference type="PANTHER" id="PTHR47573">
    <property type="entry name" value="PROTEIN AF-9 HOMOLOG"/>
    <property type="match status" value="1"/>
</dbReference>
<dbReference type="PANTHER" id="PTHR47573:SF1">
    <property type="entry name" value="PROTEIN AF-9 HOMOLOG"/>
    <property type="match status" value="1"/>
</dbReference>
<dbReference type="Pfam" id="PF03366">
    <property type="entry name" value="YEATS"/>
    <property type="match status" value="1"/>
</dbReference>
<dbReference type="PROSITE" id="PS51037">
    <property type="entry name" value="YEATS"/>
    <property type="match status" value="1"/>
</dbReference>